<comment type="function">
    <text evidence="1">Catalyzes the S-adenosylmethionine monomethyl esterification of trans-aconitate.</text>
</comment>
<comment type="catalytic activity">
    <reaction evidence="1">
        <text>trans-aconitate + S-adenosyl-L-methionine = (E)-3-(methoxycarbonyl)pent-2-enedioate + S-adenosyl-L-homocysteine</text>
        <dbReference type="Rhea" id="RHEA:14969"/>
        <dbReference type="ChEBI" id="CHEBI:15708"/>
        <dbReference type="ChEBI" id="CHEBI:57470"/>
        <dbReference type="ChEBI" id="CHEBI:57856"/>
        <dbReference type="ChEBI" id="CHEBI:59789"/>
        <dbReference type="EC" id="2.1.1.144"/>
    </reaction>
</comment>
<comment type="subcellular location">
    <subcellularLocation>
        <location evidence="1">Cytoplasm</location>
    </subcellularLocation>
</comment>
<comment type="similarity">
    <text evidence="1">Belongs to the methyltransferase superfamily. Tam family.</text>
</comment>
<accession>Q9I0S1</accession>
<feature type="chain" id="PRO_0000218084" description="Trans-aconitate 2-methyltransferase">
    <location>
        <begin position="1"/>
        <end position="275"/>
    </location>
</feature>
<reference key="1">
    <citation type="journal article" date="2000" name="Nature">
        <title>Complete genome sequence of Pseudomonas aeruginosa PAO1, an opportunistic pathogen.</title>
        <authorList>
            <person name="Stover C.K."/>
            <person name="Pham X.-Q.T."/>
            <person name="Erwin A.L."/>
            <person name="Mizoguchi S.D."/>
            <person name="Warrener P."/>
            <person name="Hickey M.J."/>
            <person name="Brinkman F.S.L."/>
            <person name="Hufnagle W.O."/>
            <person name="Kowalik D.J."/>
            <person name="Lagrou M."/>
            <person name="Garber R.L."/>
            <person name="Goltry L."/>
            <person name="Tolentino E."/>
            <person name="Westbrock-Wadman S."/>
            <person name="Yuan Y."/>
            <person name="Brody L.L."/>
            <person name="Coulter S.N."/>
            <person name="Folger K.R."/>
            <person name="Kas A."/>
            <person name="Larbig K."/>
            <person name="Lim R.M."/>
            <person name="Smith K.A."/>
            <person name="Spencer D.H."/>
            <person name="Wong G.K.-S."/>
            <person name="Wu Z."/>
            <person name="Paulsen I.T."/>
            <person name="Reizer J."/>
            <person name="Saier M.H. Jr."/>
            <person name="Hancock R.E.W."/>
            <person name="Lory S."/>
            <person name="Olson M.V."/>
        </authorList>
    </citation>
    <scope>NUCLEOTIDE SEQUENCE [LARGE SCALE GENOMIC DNA]</scope>
    <source>
        <strain>ATCC 15692 / DSM 22644 / CIP 104116 / JCM 14847 / LMG 12228 / 1C / PRS 101 / PAO1</strain>
    </source>
</reference>
<organism>
    <name type="scientific">Pseudomonas aeruginosa (strain ATCC 15692 / DSM 22644 / CIP 104116 / JCM 14847 / LMG 12228 / 1C / PRS 101 / PAO1)</name>
    <dbReference type="NCBI Taxonomy" id="208964"/>
    <lineage>
        <taxon>Bacteria</taxon>
        <taxon>Pseudomonadati</taxon>
        <taxon>Pseudomonadota</taxon>
        <taxon>Gammaproteobacteria</taxon>
        <taxon>Pseudomonadales</taxon>
        <taxon>Pseudomonadaceae</taxon>
        <taxon>Pseudomonas</taxon>
    </lineage>
</organism>
<evidence type="ECO:0000255" key="1">
    <source>
        <dbReference type="HAMAP-Rule" id="MF_00560"/>
    </source>
</evidence>
<sequence>MVHDLLRDRADLEARWNPSAYMQFARLRQRPVVELLDHIEPCCPERIYDLGCGTGIATELLARRWPLAELYGVDSSVEMLEEAARLPIKASWERANLRHWCAERPASLLFAAAVLHFLEDHGKLLPRLLGQLTPGGCLAAHMPNWRDASWYRLMLDALDSAGPGGASLGSPALRYRLHRRNVLSLDNYYRLLAPLTAELDIWETEYLQVVDGNDPIFDWIKVSALRPVLGELDEEARRRFLDRYLELLHRHYPRELDGRTLFPFRRVFIVASLGR</sequence>
<dbReference type="EC" id="2.1.1.144" evidence="1"/>
<dbReference type="EMBL" id="AE004091">
    <property type="protein sequence ID" value="AAG05952.1"/>
    <property type="molecule type" value="Genomic_DNA"/>
</dbReference>
<dbReference type="PIR" id="H83325">
    <property type="entry name" value="H83325"/>
</dbReference>
<dbReference type="RefSeq" id="NP_251254.1">
    <property type="nucleotide sequence ID" value="NC_002516.2"/>
</dbReference>
<dbReference type="RefSeq" id="WP_003113340.1">
    <property type="nucleotide sequence ID" value="NZ_QZGE01000008.1"/>
</dbReference>
<dbReference type="SMR" id="Q9I0S1"/>
<dbReference type="FunCoup" id="Q9I0S1">
    <property type="interactions" value="120"/>
</dbReference>
<dbReference type="STRING" id="208964.PA2564"/>
<dbReference type="PaxDb" id="208964-PA2564"/>
<dbReference type="DNASU" id="882722"/>
<dbReference type="GeneID" id="882722"/>
<dbReference type="KEGG" id="pae:PA2564"/>
<dbReference type="PATRIC" id="fig|208964.12.peg.2684"/>
<dbReference type="PseudoCAP" id="PA2564"/>
<dbReference type="HOGENOM" id="CLU_037990_5_2_6"/>
<dbReference type="InParanoid" id="Q9I0S1"/>
<dbReference type="OrthoDB" id="9795085at2"/>
<dbReference type="PhylomeDB" id="Q9I0S1"/>
<dbReference type="BioCyc" id="PAER208964:G1FZ6-2600-MONOMER"/>
<dbReference type="Proteomes" id="UP000002438">
    <property type="component" value="Chromosome"/>
</dbReference>
<dbReference type="GO" id="GO:0005737">
    <property type="term" value="C:cytoplasm"/>
    <property type="evidence" value="ECO:0007669"/>
    <property type="project" value="UniProtKB-SubCell"/>
</dbReference>
<dbReference type="GO" id="GO:0030798">
    <property type="term" value="F:trans-aconitate 2-methyltransferase activity"/>
    <property type="evidence" value="ECO:0007669"/>
    <property type="project" value="UniProtKB-UniRule"/>
</dbReference>
<dbReference type="GO" id="GO:0032259">
    <property type="term" value="P:methylation"/>
    <property type="evidence" value="ECO:0007669"/>
    <property type="project" value="UniProtKB-KW"/>
</dbReference>
<dbReference type="CDD" id="cd02440">
    <property type="entry name" value="AdoMet_MTases"/>
    <property type="match status" value="1"/>
</dbReference>
<dbReference type="Gene3D" id="1.10.150.290">
    <property type="entry name" value="S-adenosyl-L-methionine-dependent methyltransferases"/>
    <property type="match status" value="1"/>
</dbReference>
<dbReference type="Gene3D" id="3.40.50.150">
    <property type="entry name" value="Vaccinia Virus protein VP39"/>
    <property type="match status" value="1"/>
</dbReference>
<dbReference type="HAMAP" id="MF_00560">
    <property type="entry name" value="Tran_acon_Me_trans"/>
    <property type="match status" value="1"/>
</dbReference>
<dbReference type="InterPro" id="IPR041698">
    <property type="entry name" value="Methyltransf_25"/>
</dbReference>
<dbReference type="InterPro" id="IPR029063">
    <property type="entry name" value="SAM-dependent_MTases_sf"/>
</dbReference>
<dbReference type="InterPro" id="IPR023506">
    <property type="entry name" value="Trans-aconitate_MeTrfase"/>
</dbReference>
<dbReference type="InterPro" id="IPR023149">
    <property type="entry name" value="Trans_acon_MeTrfase_C"/>
</dbReference>
<dbReference type="PANTHER" id="PTHR43861:SF1">
    <property type="entry name" value="TRANS-ACONITATE 2-METHYLTRANSFERASE"/>
    <property type="match status" value="1"/>
</dbReference>
<dbReference type="PANTHER" id="PTHR43861">
    <property type="entry name" value="TRANS-ACONITATE 2-METHYLTRANSFERASE-RELATED"/>
    <property type="match status" value="1"/>
</dbReference>
<dbReference type="Pfam" id="PF13649">
    <property type="entry name" value="Methyltransf_25"/>
    <property type="match status" value="1"/>
</dbReference>
<dbReference type="SUPFAM" id="SSF53335">
    <property type="entry name" value="S-adenosyl-L-methionine-dependent methyltransferases"/>
    <property type="match status" value="1"/>
</dbReference>
<gene>
    <name evidence="1" type="primary">tam</name>
    <name type="ordered locus">PA2564</name>
</gene>
<keyword id="KW-0963">Cytoplasm</keyword>
<keyword id="KW-0489">Methyltransferase</keyword>
<keyword id="KW-1185">Reference proteome</keyword>
<keyword id="KW-0949">S-adenosyl-L-methionine</keyword>
<keyword id="KW-0808">Transferase</keyword>
<proteinExistence type="inferred from homology"/>
<protein>
    <recommendedName>
        <fullName evidence="1">Trans-aconitate 2-methyltransferase</fullName>
        <ecNumber evidence="1">2.1.1.144</ecNumber>
    </recommendedName>
</protein>
<name>TAM_PSEAE</name>